<protein>
    <recommendedName>
        <fullName>Protein H339R</fullName>
        <shortName>pH339R</shortName>
    </recommendedName>
    <alternativeName>
        <fullName>Protein j4R</fullName>
    </alternativeName>
</protein>
<name>VFH33_ASFP4</name>
<comment type="subunit">
    <text evidence="1">Interacts with host NACA (alpha chain of nascent polypeptide-associated complex).</text>
</comment>
<comment type="subcellular location">
    <subcellularLocation>
        <location evidence="1">Host cytoplasm</location>
    </subcellularLocation>
    <subcellularLocation>
        <location evidence="1">Host nucleus</location>
    </subcellularLocation>
</comment>
<comment type="induction">
    <text evidence="2">Expressed in the late phase of the viral replicative cycle.</text>
</comment>
<comment type="similarity">
    <text evidence="2">Belongs to the asfivirus H339R family.</text>
</comment>
<organism>
    <name type="scientific">African swine fever virus (isolate Tick/South Africa/Pretoriuskop Pr4/1996)</name>
    <name type="common">ASFV</name>
    <dbReference type="NCBI Taxonomy" id="561443"/>
    <lineage>
        <taxon>Viruses</taxon>
        <taxon>Varidnaviria</taxon>
        <taxon>Bamfordvirae</taxon>
        <taxon>Nucleocytoviricota</taxon>
        <taxon>Pokkesviricetes</taxon>
        <taxon>Asfuvirales</taxon>
        <taxon>Asfarviridae</taxon>
        <taxon>Asfivirus</taxon>
        <taxon>African swine fever virus</taxon>
    </lineage>
</organism>
<gene>
    <name type="ordered locus">Pret-128</name>
</gene>
<evidence type="ECO:0000250" key="1">
    <source>
        <dbReference type="UniProtKB" id="Q65187"/>
    </source>
</evidence>
<evidence type="ECO:0000305" key="2"/>
<sequence>MAGRVKIKQKELIDSTVKNKNVMNLFHEIIGSKGNINFSVVWPKFKKIKQSVYDYISTLSVLEKASVMQNFEDDKKLLELFVQKLWAAYEGYFKYPEIEKYEVEGQVNFNLVPQYVLEKFSQLYRIRINSELVTLILNSCAFMSKYNDYILKKDPYILTITPGLCFSPIPNFEDLNFKHLYNSDKNSQHDKDFIMFILYKLYTAALGVYNAISIPDIDVEDLENIILSSVSQIKKQIPRCKDAFNKIESSVHLLRKNFNTYYSDYVGSGYNPTIIMEQYIKDISQDSKNISPRISYQFRTIIKYYRDMIATKHQTMDPQVLNLVKHVEKKLDMLDREKN</sequence>
<keyword id="KW-1035">Host cytoplasm</keyword>
<keyword id="KW-1048">Host nucleus</keyword>
<keyword id="KW-0945">Host-virus interaction</keyword>
<keyword id="KW-0426">Late protein</keyword>
<proteinExistence type="inferred from homology"/>
<reference key="1">
    <citation type="submission" date="2003-03" db="EMBL/GenBank/DDBJ databases">
        <title>African swine fever virus genomes.</title>
        <authorList>
            <person name="Kutish G.F."/>
            <person name="Rock D.L."/>
        </authorList>
    </citation>
    <scope>NUCLEOTIDE SEQUENCE [GENOMIC DNA]</scope>
</reference>
<dbReference type="EMBL" id="AY261363">
    <property type="status" value="NOT_ANNOTATED_CDS"/>
    <property type="molecule type" value="Genomic_DNA"/>
</dbReference>
<dbReference type="SMR" id="P0CAN4"/>
<dbReference type="Proteomes" id="UP000000859">
    <property type="component" value="Segment"/>
</dbReference>
<dbReference type="GO" id="GO:0030430">
    <property type="term" value="C:host cell cytoplasm"/>
    <property type="evidence" value="ECO:0007669"/>
    <property type="project" value="UniProtKB-SubCell"/>
</dbReference>
<dbReference type="GO" id="GO:0042025">
    <property type="term" value="C:host cell nucleus"/>
    <property type="evidence" value="ECO:0007669"/>
    <property type="project" value="UniProtKB-SubCell"/>
</dbReference>
<feature type="chain" id="PRO_0000373772" description="Protein H339R">
    <location>
        <begin position="1"/>
        <end position="339"/>
    </location>
</feature>
<organismHost>
    <name type="scientific">Ornithodoros</name>
    <name type="common">relapsing fever ticks</name>
    <dbReference type="NCBI Taxonomy" id="6937"/>
</organismHost>
<organismHost>
    <name type="scientific">Phacochoerus aethiopicus</name>
    <name type="common">Warthog</name>
    <dbReference type="NCBI Taxonomy" id="85517"/>
</organismHost>
<organismHost>
    <name type="scientific">Phacochoerus africanus</name>
    <name type="common">Warthog</name>
    <dbReference type="NCBI Taxonomy" id="41426"/>
</organismHost>
<organismHost>
    <name type="scientific">Potamochoerus larvatus</name>
    <name type="common">Bushpig</name>
    <dbReference type="NCBI Taxonomy" id="273792"/>
</organismHost>
<organismHost>
    <name type="scientific">Sus scrofa</name>
    <name type="common">Pig</name>
    <dbReference type="NCBI Taxonomy" id="9823"/>
</organismHost>
<accession>P0CAN4</accession>